<comment type="function">
    <text evidence="1">NAD-binding protein involved in the addition of a carboxymethylaminomethyl (cmnm) group at the wobble position (U34) of certain tRNAs, forming tRNA-cmnm(5)s(2)U34.</text>
</comment>
<comment type="cofactor">
    <cofactor evidence="1">
        <name>FAD</name>
        <dbReference type="ChEBI" id="CHEBI:57692"/>
    </cofactor>
</comment>
<comment type="subunit">
    <text evidence="1">Homodimer. Heterotetramer of two MnmE and two MnmG subunits.</text>
</comment>
<comment type="subcellular location">
    <subcellularLocation>
        <location evidence="1">Cytoplasm</location>
    </subcellularLocation>
</comment>
<comment type="similarity">
    <text evidence="1">Belongs to the MnmG family.</text>
</comment>
<gene>
    <name evidence="1" type="primary">mnmG</name>
    <name evidence="1" type="synonym">gidA</name>
</gene>
<protein>
    <recommendedName>
        <fullName evidence="1">tRNA uridine 5-carboxymethylaminomethyl modification enzyme MnmG</fullName>
    </recommendedName>
    <alternativeName>
        <fullName evidence="1">Glucose-inhibited division protein A</fullName>
    </alternativeName>
</protein>
<proteinExistence type="inferred from homology"/>
<feature type="chain" id="PRO_0000117155" description="tRNA uridine 5-carboxymethylaminomethyl modification enzyme MnmG">
    <location>
        <begin position="1"/>
        <end position="630"/>
    </location>
</feature>
<feature type="binding site" evidence="1">
    <location>
        <begin position="13"/>
        <end position="18"/>
    </location>
    <ligand>
        <name>FAD</name>
        <dbReference type="ChEBI" id="CHEBI:57692"/>
    </ligand>
</feature>
<feature type="binding site" evidence="1">
    <location>
        <begin position="273"/>
        <end position="287"/>
    </location>
    <ligand>
        <name>NAD(+)</name>
        <dbReference type="ChEBI" id="CHEBI:57540"/>
    </ligand>
</feature>
<name>MNMG_PSEPU</name>
<sequence>MDFPSRFDVIVIGGGHAGTEAALASARMGVKTLLLTHNVETLGHMSCNPAIGGIGKSHLVKEIDALGGAMALATDKSGIQFRVLNNRKGPAVRATRAQADRAIYKAVVREILENQPNLWIFQQNCDDLIVEQDQVKGVVTQMGLRFFAESVVLTTGTFLGGLIHIGLQNHSGGRAGDPPSIALAHRMRELPLRVGRLKTGTPPRIDGRSVDFSVMTEQPGDTPIPVMSFMGNAEMHPRQVSCWITHTNARTHEIIASNLDRSPMYSGVIEGVGPRYCPSIEDKIHRFADKESHQVFIEPEGLNTHELYPNGISTSLPFDVQLELVRSIRGMENAHIVRPGYAIEYDYFDPRDLKYSLETKVIGGLFFAGQINGTTGYEEAGAQGLLAGTNAALRAQGRDSWCPRRDEAYIGVLVDDLITLGTQEPYRMFTSRAEYRLILREDNADLRLTEKGRELGLIDDQRWAAFCAKRDGIEREEQRLKSTWVRPNTEQGQAIVDKFGTPLSHEYSLLNLLARPEIDYAGLIEATGGEAIDPQVAEQVEIRTKYAGYIDRQQDEIARLRASEDTRLPVDIDYTTISGLSKEIQGKLSQTRPQTLGQASRIPGVTPAAISLLLIHLKKRGAGRELEQSA</sequence>
<organism>
    <name type="scientific">Pseudomonas putida</name>
    <name type="common">Arthrobacter siderocapsulatus</name>
    <dbReference type="NCBI Taxonomy" id="303"/>
    <lineage>
        <taxon>Bacteria</taxon>
        <taxon>Pseudomonadati</taxon>
        <taxon>Pseudomonadota</taxon>
        <taxon>Gammaproteobacteria</taxon>
        <taxon>Pseudomonadales</taxon>
        <taxon>Pseudomonadaceae</taxon>
        <taxon>Pseudomonas</taxon>
    </lineage>
</organism>
<dbReference type="EMBL" id="X62540">
    <property type="protein sequence ID" value="CAA44419.1"/>
    <property type="molecule type" value="Genomic_DNA"/>
</dbReference>
<dbReference type="PIR" id="JQ1223">
    <property type="entry name" value="BWPSAP"/>
</dbReference>
<dbReference type="SMR" id="P25756"/>
<dbReference type="eggNOG" id="COG0445">
    <property type="taxonomic scope" value="Bacteria"/>
</dbReference>
<dbReference type="GO" id="GO:0005829">
    <property type="term" value="C:cytosol"/>
    <property type="evidence" value="ECO:0007669"/>
    <property type="project" value="TreeGrafter"/>
</dbReference>
<dbReference type="GO" id="GO:0050660">
    <property type="term" value="F:flavin adenine dinucleotide binding"/>
    <property type="evidence" value="ECO:0007669"/>
    <property type="project" value="UniProtKB-UniRule"/>
</dbReference>
<dbReference type="GO" id="GO:0030488">
    <property type="term" value="P:tRNA methylation"/>
    <property type="evidence" value="ECO:0007669"/>
    <property type="project" value="TreeGrafter"/>
</dbReference>
<dbReference type="GO" id="GO:0002098">
    <property type="term" value="P:tRNA wobble uridine modification"/>
    <property type="evidence" value="ECO:0007669"/>
    <property type="project" value="InterPro"/>
</dbReference>
<dbReference type="FunFam" id="1.10.10.1800:FF:000001">
    <property type="entry name" value="tRNA uridine 5-carboxymethylaminomethyl modification enzyme MnmG"/>
    <property type="match status" value="1"/>
</dbReference>
<dbReference type="FunFam" id="1.10.150.570:FF:000001">
    <property type="entry name" value="tRNA uridine 5-carboxymethylaminomethyl modification enzyme MnmG"/>
    <property type="match status" value="1"/>
</dbReference>
<dbReference type="FunFam" id="3.50.50.60:FF:000002">
    <property type="entry name" value="tRNA uridine 5-carboxymethylaminomethyl modification enzyme MnmG"/>
    <property type="match status" value="1"/>
</dbReference>
<dbReference type="FunFam" id="3.50.50.60:FF:000010">
    <property type="entry name" value="tRNA uridine 5-carboxymethylaminomethyl modification enzyme MnmG"/>
    <property type="match status" value="1"/>
</dbReference>
<dbReference type="Gene3D" id="3.50.50.60">
    <property type="entry name" value="FAD/NAD(P)-binding domain"/>
    <property type="match status" value="2"/>
</dbReference>
<dbReference type="Gene3D" id="1.10.150.570">
    <property type="entry name" value="GidA associated domain, C-terminal subdomain"/>
    <property type="match status" value="1"/>
</dbReference>
<dbReference type="Gene3D" id="1.10.10.1800">
    <property type="entry name" value="tRNA uridine 5-carboxymethylaminomethyl modification enzyme MnmG/GidA"/>
    <property type="match status" value="1"/>
</dbReference>
<dbReference type="HAMAP" id="MF_00129">
    <property type="entry name" value="MnmG_GidA"/>
    <property type="match status" value="1"/>
</dbReference>
<dbReference type="InterPro" id="IPR036188">
    <property type="entry name" value="FAD/NAD-bd_sf"/>
</dbReference>
<dbReference type="InterPro" id="IPR049312">
    <property type="entry name" value="GIDA_C_N"/>
</dbReference>
<dbReference type="InterPro" id="IPR004416">
    <property type="entry name" value="MnmG"/>
</dbReference>
<dbReference type="InterPro" id="IPR002218">
    <property type="entry name" value="MnmG-rel"/>
</dbReference>
<dbReference type="InterPro" id="IPR020595">
    <property type="entry name" value="MnmG-rel_CS"/>
</dbReference>
<dbReference type="InterPro" id="IPR026904">
    <property type="entry name" value="MnmG_C"/>
</dbReference>
<dbReference type="InterPro" id="IPR047001">
    <property type="entry name" value="MnmG_C_subdom"/>
</dbReference>
<dbReference type="InterPro" id="IPR044920">
    <property type="entry name" value="MnmG_C_subdom_sf"/>
</dbReference>
<dbReference type="InterPro" id="IPR040131">
    <property type="entry name" value="MnmG_N"/>
</dbReference>
<dbReference type="NCBIfam" id="TIGR00136">
    <property type="entry name" value="mnmG_gidA"/>
    <property type="match status" value="1"/>
</dbReference>
<dbReference type="PANTHER" id="PTHR11806">
    <property type="entry name" value="GLUCOSE INHIBITED DIVISION PROTEIN A"/>
    <property type="match status" value="1"/>
</dbReference>
<dbReference type="PANTHER" id="PTHR11806:SF0">
    <property type="entry name" value="PROTEIN MTO1 HOMOLOG, MITOCHONDRIAL"/>
    <property type="match status" value="1"/>
</dbReference>
<dbReference type="Pfam" id="PF01134">
    <property type="entry name" value="GIDA"/>
    <property type="match status" value="1"/>
</dbReference>
<dbReference type="Pfam" id="PF21680">
    <property type="entry name" value="GIDA_C_1st"/>
    <property type="match status" value="1"/>
</dbReference>
<dbReference type="Pfam" id="PF13932">
    <property type="entry name" value="SAM_GIDA_C"/>
    <property type="match status" value="1"/>
</dbReference>
<dbReference type="PRINTS" id="PR00411">
    <property type="entry name" value="PNDRDTASEI"/>
</dbReference>
<dbReference type="SMART" id="SM01228">
    <property type="entry name" value="GIDA_assoc_3"/>
    <property type="match status" value="1"/>
</dbReference>
<dbReference type="SUPFAM" id="SSF51905">
    <property type="entry name" value="FAD/NAD(P)-binding domain"/>
    <property type="match status" value="1"/>
</dbReference>
<dbReference type="PROSITE" id="PS01280">
    <property type="entry name" value="GIDA_1"/>
    <property type="match status" value="1"/>
</dbReference>
<dbReference type="PROSITE" id="PS01281">
    <property type="entry name" value="GIDA_2"/>
    <property type="match status" value="1"/>
</dbReference>
<keyword id="KW-0963">Cytoplasm</keyword>
<keyword id="KW-0274">FAD</keyword>
<keyword id="KW-0285">Flavoprotein</keyword>
<keyword id="KW-0520">NAD</keyword>
<keyword id="KW-0819">tRNA processing</keyword>
<accession>P25756</accession>
<reference key="1">
    <citation type="journal article" date="1992" name="Mol. Microbiol.">
        <title>Genes and their organization in the replication origin region of the bacterial chromosome.</title>
        <authorList>
            <person name="Ogasawara N."/>
            <person name="Yoshikawa H."/>
        </authorList>
    </citation>
    <scope>NUCLEOTIDE SEQUENCE [GENOMIC DNA]</scope>
    <source>
        <strain>TN2100</strain>
    </source>
</reference>
<evidence type="ECO:0000255" key="1">
    <source>
        <dbReference type="HAMAP-Rule" id="MF_00129"/>
    </source>
</evidence>